<evidence type="ECO:0000255" key="1">
    <source>
        <dbReference type="HAMAP-Rule" id="MF_00213"/>
    </source>
</evidence>
<keyword id="KW-0479">Metal-binding</keyword>
<keyword id="KW-0533">Nickel</keyword>
<keyword id="KW-0862">Zinc</keyword>
<protein>
    <recommendedName>
        <fullName evidence="1">Hydrogenase maturation factor HypA</fullName>
    </recommendedName>
</protein>
<reference key="1">
    <citation type="submission" date="2007-06" db="EMBL/GenBank/DDBJ databases">
        <title>Complete sequence of Methanococcus aeolicus Nankai-3.</title>
        <authorList>
            <consortium name="US DOE Joint Genome Institute"/>
            <person name="Copeland A."/>
            <person name="Lucas S."/>
            <person name="Lapidus A."/>
            <person name="Barry K."/>
            <person name="Glavina del Rio T."/>
            <person name="Dalin E."/>
            <person name="Tice H."/>
            <person name="Pitluck S."/>
            <person name="Chain P."/>
            <person name="Malfatti S."/>
            <person name="Shin M."/>
            <person name="Vergez L."/>
            <person name="Schmutz J."/>
            <person name="Larimer F."/>
            <person name="Land M."/>
            <person name="Hauser L."/>
            <person name="Kyrpides N."/>
            <person name="Lykidis A."/>
            <person name="Sieprawska-Lupa M."/>
            <person name="Whitman W.B."/>
            <person name="Richardson P."/>
        </authorList>
    </citation>
    <scope>NUCLEOTIDE SEQUENCE [LARGE SCALE GENOMIC DNA]</scope>
    <source>
        <strain>ATCC BAA-1280 / DSM 17508 / OCM 812 / Nankai-3</strain>
    </source>
</reference>
<sequence>MHELSYATSIVNAIMEHITNMEQANKVKKVSKINLEIGELTFINFEQLKFAFEVASEGTLCKDAKLEAEFLKPHIACNNCGYRGELTANDEFEVKCPECGSLSLKISGGKEFNIKNAILESDE</sequence>
<accession>A6USZ5</accession>
<dbReference type="EMBL" id="CP000743">
    <property type="protein sequence ID" value="ABR55617.1"/>
    <property type="molecule type" value="Genomic_DNA"/>
</dbReference>
<dbReference type="RefSeq" id="WP_011972749.1">
    <property type="nucleotide sequence ID" value="NC_009635.1"/>
</dbReference>
<dbReference type="SMR" id="A6USZ5"/>
<dbReference type="STRING" id="419665.Maeo_0024"/>
<dbReference type="GeneID" id="5327466"/>
<dbReference type="KEGG" id="mae:Maeo_0024"/>
<dbReference type="eggNOG" id="arCOG04426">
    <property type="taxonomic scope" value="Archaea"/>
</dbReference>
<dbReference type="HOGENOM" id="CLU_126929_2_1_2"/>
<dbReference type="OrthoDB" id="36835at2157"/>
<dbReference type="Proteomes" id="UP000001106">
    <property type="component" value="Chromosome"/>
</dbReference>
<dbReference type="GO" id="GO:0016151">
    <property type="term" value="F:nickel cation binding"/>
    <property type="evidence" value="ECO:0007669"/>
    <property type="project" value="UniProtKB-UniRule"/>
</dbReference>
<dbReference type="GO" id="GO:0008270">
    <property type="term" value="F:zinc ion binding"/>
    <property type="evidence" value="ECO:0007669"/>
    <property type="project" value="UniProtKB-UniRule"/>
</dbReference>
<dbReference type="GO" id="GO:0051604">
    <property type="term" value="P:protein maturation"/>
    <property type="evidence" value="ECO:0007669"/>
    <property type="project" value="InterPro"/>
</dbReference>
<dbReference type="GO" id="GO:0036211">
    <property type="term" value="P:protein modification process"/>
    <property type="evidence" value="ECO:0007669"/>
    <property type="project" value="UniProtKB-UniRule"/>
</dbReference>
<dbReference type="Gene3D" id="3.30.2320.80">
    <property type="match status" value="1"/>
</dbReference>
<dbReference type="HAMAP" id="MF_00213">
    <property type="entry name" value="HypA_HybF"/>
    <property type="match status" value="1"/>
</dbReference>
<dbReference type="InterPro" id="IPR000688">
    <property type="entry name" value="HypA/HybF"/>
</dbReference>
<dbReference type="NCBIfam" id="TIGR00100">
    <property type="entry name" value="hypA"/>
    <property type="match status" value="1"/>
</dbReference>
<dbReference type="PANTHER" id="PTHR34535">
    <property type="entry name" value="HYDROGENASE MATURATION FACTOR HYPA"/>
    <property type="match status" value="1"/>
</dbReference>
<dbReference type="PANTHER" id="PTHR34535:SF3">
    <property type="entry name" value="HYDROGENASE MATURATION FACTOR HYPA"/>
    <property type="match status" value="1"/>
</dbReference>
<dbReference type="Pfam" id="PF01155">
    <property type="entry name" value="HypA"/>
    <property type="match status" value="1"/>
</dbReference>
<dbReference type="PIRSF" id="PIRSF004761">
    <property type="entry name" value="Hydrgn_mat_HypA"/>
    <property type="match status" value="1"/>
</dbReference>
<feature type="chain" id="PRO_1000023836" description="Hydrogenase maturation factor HypA">
    <location>
        <begin position="1"/>
        <end position="123"/>
    </location>
</feature>
<feature type="binding site" evidence="1">
    <location>
        <position position="2"/>
    </location>
    <ligand>
        <name>Ni(2+)</name>
        <dbReference type="ChEBI" id="CHEBI:49786"/>
    </ligand>
</feature>
<feature type="binding site" evidence="1">
    <location>
        <position position="77"/>
    </location>
    <ligand>
        <name>Zn(2+)</name>
        <dbReference type="ChEBI" id="CHEBI:29105"/>
    </ligand>
</feature>
<feature type="binding site" evidence="1">
    <location>
        <position position="80"/>
    </location>
    <ligand>
        <name>Zn(2+)</name>
        <dbReference type="ChEBI" id="CHEBI:29105"/>
    </ligand>
</feature>
<feature type="binding site" evidence="1">
    <location>
        <position position="96"/>
    </location>
    <ligand>
        <name>Zn(2+)</name>
        <dbReference type="ChEBI" id="CHEBI:29105"/>
    </ligand>
</feature>
<feature type="binding site" evidence="1">
    <location>
        <position position="99"/>
    </location>
    <ligand>
        <name>Zn(2+)</name>
        <dbReference type="ChEBI" id="CHEBI:29105"/>
    </ligand>
</feature>
<comment type="function">
    <text evidence="1">Involved in the maturation of [NiFe] hydrogenases. Required for nickel insertion into the metal center of the hydrogenase.</text>
</comment>
<comment type="similarity">
    <text evidence="1">Belongs to the HypA/HybF family.</text>
</comment>
<gene>
    <name evidence="1" type="primary">hypA</name>
    <name type="ordered locus">Maeo_0024</name>
</gene>
<proteinExistence type="inferred from homology"/>
<organism>
    <name type="scientific">Methanococcus aeolicus (strain ATCC BAA-1280 / DSM 17508 / OCM 812 / Nankai-3)</name>
    <dbReference type="NCBI Taxonomy" id="419665"/>
    <lineage>
        <taxon>Archaea</taxon>
        <taxon>Methanobacteriati</taxon>
        <taxon>Methanobacteriota</taxon>
        <taxon>Methanomada group</taxon>
        <taxon>Methanococci</taxon>
        <taxon>Methanococcales</taxon>
        <taxon>Methanococcaceae</taxon>
        <taxon>Methanococcus</taxon>
    </lineage>
</organism>
<name>HYPA_META3</name>